<evidence type="ECO:0000255" key="1"/>
<evidence type="ECO:0000269" key="2">
    <source>
    </source>
</evidence>
<evidence type="ECO:0000269" key="3">
    <source>
    </source>
</evidence>
<evidence type="ECO:0000269" key="4">
    <source>
    </source>
</evidence>
<evidence type="ECO:0000269" key="5">
    <source>
    </source>
</evidence>
<evidence type="ECO:0000269" key="6">
    <source>
    </source>
</evidence>
<evidence type="ECO:0000303" key="7">
    <source>
    </source>
</evidence>
<evidence type="ECO:0000305" key="8"/>
<evidence type="ECO:0000312" key="9">
    <source>
        <dbReference type="Araport" id="AT4G35250"/>
    </source>
</evidence>
<evidence type="ECO:0000312" key="10">
    <source>
        <dbReference type="EMBL" id="CAA18744.1"/>
    </source>
</evidence>
<organism>
    <name type="scientific">Arabidopsis thaliana</name>
    <name type="common">Mouse-ear cress</name>
    <dbReference type="NCBI Taxonomy" id="3702"/>
    <lineage>
        <taxon>Eukaryota</taxon>
        <taxon>Viridiplantae</taxon>
        <taxon>Streptophyta</taxon>
        <taxon>Embryophyta</taxon>
        <taxon>Tracheophyta</taxon>
        <taxon>Spermatophyta</taxon>
        <taxon>Magnoliopsida</taxon>
        <taxon>eudicotyledons</taxon>
        <taxon>Gunneridae</taxon>
        <taxon>Pentapetalae</taxon>
        <taxon>rosids</taxon>
        <taxon>malvids</taxon>
        <taxon>Brassicales</taxon>
        <taxon>Brassicaceae</taxon>
        <taxon>Camelineae</taxon>
        <taxon>Arabidopsis</taxon>
    </lineage>
</organism>
<name>HC244_ARATH</name>
<dbReference type="EMBL" id="AL022604">
    <property type="protein sequence ID" value="CAA18744.1"/>
    <property type="molecule type" value="Genomic_DNA"/>
</dbReference>
<dbReference type="EMBL" id="AL161587">
    <property type="protein sequence ID" value="CAB80242.1"/>
    <property type="molecule type" value="Genomic_DNA"/>
</dbReference>
<dbReference type="EMBL" id="CP002687">
    <property type="protein sequence ID" value="AEE86485.1"/>
    <property type="molecule type" value="Genomic_DNA"/>
</dbReference>
<dbReference type="EMBL" id="AF462834">
    <property type="protein sequence ID" value="AAL58922.1"/>
    <property type="molecule type" value="mRNA"/>
</dbReference>
<dbReference type="EMBL" id="AY133542">
    <property type="protein sequence ID" value="AAM91372.1"/>
    <property type="molecule type" value="mRNA"/>
</dbReference>
<dbReference type="PIR" id="T06132">
    <property type="entry name" value="T06132"/>
</dbReference>
<dbReference type="RefSeq" id="NP_195251.1">
    <property type="nucleotide sequence ID" value="NM_119691.4"/>
</dbReference>
<dbReference type="SMR" id="O65502"/>
<dbReference type="FunCoup" id="O65502">
    <property type="interactions" value="936"/>
</dbReference>
<dbReference type="IntAct" id="O65502">
    <property type="interactions" value="5"/>
</dbReference>
<dbReference type="STRING" id="3702.O65502"/>
<dbReference type="PaxDb" id="3702-AT4G35250.1"/>
<dbReference type="ProteomicsDB" id="175118"/>
<dbReference type="EnsemblPlants" id="AT4G35250.1">
    <property type="protein sequence ID" value="AT4G35250.1"/>
    <property type="gene ID" value="AT4G35250"/>
</dbReference>
<dbReference type="GeneID" id="829678"/>
<dbReference type="Gramene" id="AT4G35250.1">
    <property type="protein sequence ID" value="AT4G35250.1"/>
    <property type="gene ID" value="AT4G35250"/>
</dbReference>
<dbReference type="KEGG" id="ath:AT4G35250"/>
<dbReference type="Araport" id="AT4G35250"/>
<dbReference type="TAIR" id="AT4G35250">
    <property type="gene designation" value="HCF244"/>
</dbReference>
<dbReference type="eggNOG" id="KOG1203">
    <property type="taxonomic scope" value="Eukaryota"/>
</dbReference>
<dbReference type="HOGENOM" id="CLU_007383_10_3_1"/>
<dbReference type="InParanoid" id="O65502"/>
<dbReference type="OMA" id="AYMNTQD"/>
<dbReference type="OrthoDB" id="419598at2759"/>
<dbReference type="PhylomeDB" id="O65502"/>
<dbReference type="PRO" id="PR:O65502"/>
<dbReference type="Proteomes" id="UP000006548">
    <property type="component" value="Chromosome 4"/>
</dbReference>
<dbReference type="ExpressionAtlas" id="O65502">
    <property type="expression patterns" value="baseline and differential"/>
</dbReference>
<dbReference type="GO" id="GO:0009507">
    <property type="term" value="C:chloroplast"/>
    <property type="evidence" value="ECO:0007005"/>
    <property type="project" value="TAIR"/>
</dbReference>
<dbReference type="GO" id="GO:0009570">
    <property type="term" value="C:chloroplast stroma"/>
    <property type="evidence" value="ECO:0000314"/>
    <property type="project" value="UniProtKB"/>
</dbReference>
<dbReference type="GO" id="GO:0009534">
    <property type="term" value="C:chloroplast thylakoid"/>
    <property type="evidence" value="ECO:0000314"/>
    <property type="project" value="TAIR"/>
</dbReference>
<dbReference type="GO" id="GO:0009535">
    <property type="term" value="C:chloroplast thylakoid membrane"/>
    <property type="evidence" value="ECO:0007669"/>
    <property type="project" value="UniProtKB-SubCell"/>
</dbReference>
<dbReference type="GO" id="GO:0009523">
    <property type="term" value="C:photosystem II"/>
    <property type="evidence" value="ECO:0007669"/>
    <property type="project" value="UniProtKB-KW"/>
</dbReference>
<dbReference type="GO" id="GO:0005886">
    <property type="term" value="C:plasma membrane"/>
    <property type="evidence" value="ECO:0007005"/>
    <property type="project" value="TAIR"/>
</dbReference>
<dbReference type="GO" id="GO:0042651">
    <property type="term" value="C:thylakoid membrane"/>
    <property type="evidence" value="ECO:0000314"/>
    <property type="project" value="UniProtKB"/>
</dbReference>
<dbReference type="GO" id="GO:0003743">
    <property type="term" value="F:translation initiation factor activity"/>
    <property type="evidence" value="ECO:0000315"/>
    <property type="project" value="TAIR"/>
</dbReference>
<dbReference type="GO" id="GO:0010207">
    <property type="term" value="P:photosystem II assembly"/>
    <property type="evidence" value="ECO:0000315"/>
    <property type="project" value="TAIR"/>
</dbReference>
<dbReference type="CDD" id="cd05243">
    <property type="entry name" value="SDR_a5"/>
    <property type="match status" value="1"/>
</dbReference>
<dbReference type="FunFam" id="3.40.50.720:FF:000324">
    <property type="entry name" value="uncharacterized protein ycf39 isoform X1"/>
    <property type="match status" value="1"/>
</dbReference>
<dbReference type="Gene3D" id="3.40.50.720">
    <property type="entry name" value="NAD(P)-binding Rossmann-like Domain"/>
    <property type="match status" value="1"/>
</dbReference>
<dbReference type="InterPro" id="IPR044256">
    <property type="entry name" value="HCF244-like"/>
</dbReference>
<dbReference type="InterPro" id="IPR036291">
    <property type="entry name" value="NAD(P)-bd_dom_sf"/>
</dbReference>
<dbReference type="InterPro" id="IPR008030">
    <property type="entry name" value="NmrA-like"/>
</dbReference>
<dbReference type="PANTHER" id="PTHR47128">
    <property type="match status" value="1"/>
</dbReference>
<dbReference type="PANTHER" id="PTHR47128:SF2">
    <property type="entry name" value="PROTEIN HIGH CHLOROPHYLL FLUORESCENCE PHENOTYPE 244, CHLOROPLASTIC"/>
    <property type="match status" value="1"/>
</dbReference>
<dbReference type="Pfam" id="PF05368">
    <property type="entry name" value="NmrA"/>
    <property type="match status" value="1"/>
</dbReference>
<dbReference type="SUPFAM" id="SSF51735">
    <property type="entry name" value="NAD(P)-binding Rossmann-fold domains"/>
    <property type="match status" value="1"/>
</dbReference>
<sequence length="395" mass="43723">MASLRLPAQLVTRGNLIHHNSSSSSSGRLSWRRSLTPENTIPLFPSSSSSSLNRERSIVVPVTCSAAAVNLAPGTPVRPTSILVVGATGTLGRQIVRRALDEGYDVRCLVRPRPAPADFLRDWGATVVNADLSKPETIPATLVGIHTVIDCATGRPEEPIKTVDWEGKVALIQCAKAMGIQKYVFYSIHNCDKHPEVPLMEIKYCTEKFLQESGLNHITIRLCGFMQGLIGQYAVPILEEKSVWGTDAPTRVAYMDTQDIARLTLIALRNEKINGKLLTFAGPRAWTTQEVITLCERLAGQDANVTTVPVSVLRVTRQLTRFFQWTNDVADRLAFSEVLSSDTVFSAPMTETNSLLGVDQKDMVTLEKYLQDYFSNILKKLKDLKAQSKQSDIYF</sequence>
<proteinExistence type="evidence at protein level"/>
<gene>
    <name evidence="7" type="primary">HCF244</name>
    <name evidence="9" type="ordered locus">At4g35250</name>
    <name evidence="10" type="ORF">F23E12.190</name>
</gene>
<keyword id="KW-0150">Chloroplast</keyword>
<keyword id="KW-0472">Membrane</keyword>
<keyword id="KW-0602">Photosynthesis</keyword>
<keyword id="KW-0604">Photosystem II</keyword>
<keyword id="KW-0934">Plastid</keyword>
<keyword id="KW-1185">Reference proteome</keyword>
<keyword id="KW-0793">Thylakoid</keyword>
<keyword id="KW-0809">Transit peptide</keyword>
<protein>
    <recommendedName>
        <fullName evidence="7">Protein HIGH CHLOROPHYLL FLUORESCENCE PHENOTYPE 244, chloroplastic</fullName>
    </recommendedName>
</protein>
<feature type="transit peptide" description="Chloroplast" evidence="1">
    <location>
        <begin position="1"/>
        <end position="64"/>
    </location>
</feature>
<feature type="chain" id="PRO_0000447638" description="Protein HIGH CHLOROPHYLL FLUORESCENCE PHENOTYPE 244, chloroplastic">
    <location>
        <begin position="65"/>
        <end position="395"/>
    </location>
</feature>
<accession>O65502</accession>
<comment type="function">
    <text evidence="4 5 6">Auxiliary factor required, together with HCF173, for the biogenesis of photosystem II (PSII), especially for the synthesis of the reaction center proteins (e.g. D1), via the regulation of the corresponding mRNA (e.g. psbA) translation initiation (ribosomal loading) and stabilization (PubMed:29930106). Forms a trimeric complex with OHP1 and OHP2 that is required to promote PSII core subunit assembly (PubMed:29930106, PubMed:30397023). The trimeric complex forms a transient PSII reaction center-like complex with PsbA, PsbD, PsbE, PsbF and PsbI subunits in thylakoids for early assembly of PSII as well as PSII repair (PubMed:30397023). The trimeric complex is required for the recruitment of ribosomes to the psbA mRNA during PSII biogenesis and repair (PubMed:31991763).</text>
</comment>
<comment type="subunit">
    <text evidence="2 3 4 5">Component of a high molecular weight complex containing OHP1, OHP2 and HCF244, and PSII core proteins D1/D2, HCF136 and HCF173 (PubMed:23027666, PubMed:29438089). Interacts with OHP1 (PubMed:29438089). Forms a trimeric complex with OHP1 and OHP2 that mutually stabilizes each subunit (PubMed:29930106, PubMed:30397023).</text>
</comment>
<comment type="subcellular location">
    <subcellularLocation>
        <location evidence="2">Plastid</location>
        <location evidence="2">Chloroplast stroma</location>
    </subcellularLocation>
    <subcellularLocation>
        <location evidence="2">Plastid</location>
        <location evidence="2">Chloroplast thylakoid membrane</location>
        <topology evidence="2">Peripheral membrane protein</topology>
        <orientation evidence="2">Stromal side</orientation>
    </subcellularLocation>
    <text evidence="2">Predominantly present at thylakoid membranes.</text>
</comment>
<comment type="disruption phenotype">
    <text evidence="2">Impaired photoautotrophy (PubMed:23027666). Seedling lethal (PubMed:23027666). High chlorophyll fluorescence phenotype and severely affected photosystem II (PSII) subunits accumulation associated with a drastically decreased synthesis of the reaction center protein D1 due to a reduced translation initiation (ribosomal loading) of the corresponding psbA mRNA (PubMed:23027666). Plants lacking both HCF173 and HCF244 display stronger PSII defects (PubMed:23027666).</text>
</comment>
<comment type="similarity">
    <text evidence="8">Belongs to the NmrA-type oxidoreductase family.</text>
</comment>
<reference key="1">
    <citation type="journal article" date="1999" name="Nature">
        <title>Sequence and analysis of chromosome 4 of the plant Arabidopsis thaliana.</title>
        <authorList>
            <person name="Mayer K.F.X."/>
            <person name="Schueller C."/>
            <person name="Wambutt R."/>
            <person name="Murphy G."/>
            <person name="Volckaert G."/>
            <person name="Pohl T."/>
            <person name="Duesterhoeft A."/>
            <person name="Stiekema W."/>
            <person name="Entian K.-D."/>
            <person name="Terryn N."/>
            <person name="Harris B."/>
            <person name="Ansorge W."/>
            <person name="Brandt P."/>
            <person name="Grivell L.A."/>
            <person name="Rieger M."/>
            <person name="Weichselgartner M."/>
            <person name="de Simone V."/>
            <person name="Obermaier B."/>
            <person name="Mache R."/>
            <person name="Mueller M."/>
            <person name="Kreis M."/>
            <person name="Delseny M."/>
            <person name="Puigdomenech P."/>
            <person name="Watson M."/>
            <person name="Schmidtheini T."/>
            <person name="Reichert B."/>
            <person name="Portetelle D."/>
            <person name="Perez-Alonso M."/>
            <person name="Boutry M."/>
            <person name="Bancroft I."/>
            <person name="Vos P."/>
            <person name="Hoheisel J."/>
            <person name="Zimmermann W."/>
            <person name="Wedler H."/>
            <person name="Ridley P."/>
            <person name="Langham S.-A."/>
            <person name="McCullagh B."/>
            <person name="Bilham L."/>
            <person name="Robben J."/>
            <person name="van der Schueren J."/>
            <person name="Grymonprez B."/>
            <person name="Chuang Y.-J."/>
            <person name="Vandenbussche F."/>
            <person name="Braeken M."/>
            <person name="Weltjens I."/>
            <person name="Voet M."/>
            <person name="Bastiaens I."/>
            <person name="Aert R."/>
            <person name="Defoor E."/>
            <person name="Weitzenegger T."/>
            <person name="Bothe G."/>
            <person name="Ramsperger U."/>
            <person name="Hilbert H."/>
            <person name="Braun M."/>
            <person name="Holzer E."/>
            <person name="Brandt A."/>
            <person name="Peters S."/>
            <person name="van Staveren M."/>
            <person name="Dirkse W."/>
            <person name="Mooijman P."/>
            <person name="Klein Lankhorst R."/>
            <person name="Rose M."/>
            <person name="Hauf J."/>
            <person name="Koetter P."/>
            <person name="Berneiser S."/>
            <person name="Hempel S."/>
            <person name="Feldpausch M."/>
            <person name="Lamberth S."/>
            <person name="Van den Daele H."/>
            <person name="De Keyser A."/>
            <person name="Buysshaert C."/>
            <person name="Gielen J."/>
            <person name="Villarroel R."/>
            <person name="De Clercq R."/>
            <person name="van Montagu M."/>
            <person name="Rogers J."/>
            <person name="Cronin A."/>
            <person name="Quail M.A."/>
            <person name="Bray-Allen S."/>
            <person name="Clark L."/>
            <person name="Doggett J."/>
            <person name="Hall S."/>
            <person name="Kay M."/>
            <person name="Lennard N."/>
            <person name="McLay K."/>
            <person name="Mayes R."/>
            <person name="Pettett A."/>
            <person name="Rajandream M.A."/>
            <person name="Lyne M."/>
            <person name="Benes V."/>
            <person name="Rechmann S."/>
            <person name="Borkova D."/>
            <person name="Bloecker H."/>
            <person name="Scharfe M."/>
            <person name="Grimm M."/>
            <person name="Loehnert T.-H."/>
            <person name="Dose S."/>
            <person name="de Haan M."/>
            <person name="Maarse A.C."/>
            <person name="Schaefer M."/>
            <person name="Mueller-Auer S."/>
            <person name="Gabel C."/>
            <person name="Fuchs M."/>
            <person name="Fartmann B."/>
            <person name="Granderath K."/>
            <person name="Dauner D."/>
            <person name="Herzl A."/>
            <person name="Neumann S."/>
            <person name="Argiriou A."/>
            <person name="Vitale D."/>
            <person name="Liguori R."/>
            <person name="Piravandi E."/>
            <person name="Massenet O."/>
            <person name="Quigley F."/>
            <person name="Clabauld G."/>
            <person name="Muendlein A."/>
            <person name="Felber R."/>
            <person name="Schnabl S."/>
            <person name="Hiller R."/>
            <person name="Schmidt W."/>
            <person name="Lecharny A."/>
            <person name="Aubourg S."/>
            <person name="Chefdor F."/>
            <person name="Cooke R."/>
            <person name="Berger C."/>
            <person name="Monfort A."/>
            <person name="Casacuberta E."/>
            <person name="Gibbons T."/>
            <person name="Weber N."/>
            <person name="Vandenbol M."/>
            <person name="Bargues M."/>
            <person name="Terol J."/>
            <person name="Torres A."/>
            <person name="Perez-Perez A."/>
            <person name="Purnelle B."/>
            <person name="Bent E."/>
            <person name="Johnson S."/>
            <person name="Tacon D."/>
            <person name="Jesse T."/>
            <person name="Heijnen L."/>
            <person name="Schwarz S."/>
            <person name="Scholler P."/>
            <person name="Heber S."/>
            <person name="Francs P."/>
            <person name="Bielke C."/>
            <person name="Frishman D."/>
            <person name="Haase D."/>
            <person name="Lemcke K."/>
            <person name="Mewes H.-W."/>
            <person name="Stocker S."/>
            <person name="Zaccaria P."/>
            <person name="Bevan M."/>
            <person name="Wilson R.K."/>
            <person name="de la Bastide M."/>
            <person name="Habermann K."/>
            <person name="Parnell L."/>
            <person name="Dedhia N."/>
            <person name="Gnoj L."/>
            <person name="Schutz K."/>
            <person name="Huang E."/>
            <person name="Spiegel L."/>
            <person name="Sekhon M."/>
            <person name="Murray J."/>
            <person name="Sheet P."/>
            <person name="Cordes M."/>
            <person name="Abu-Threideh J."/>
            <person name="Stoneking T."/>
            <person name="Kalicki J."/>
            <person name="Graves T."/>
            <person name="Harmon G."/>
            <person name="Edwards J."/>
            <person name="Latreille P."/>
            <person name="Courtney L."/>
            <person name="Cloud J."/>
            <person name="Abbott A."/>
            <person name="Scott K."/>
            <person name="Johnson D."/>
            <person name="Minx P."/>
            <person name="Bentley D."/>
            <person name="Fulton B."/>
            <person name="Miller N."/>
            <person name="Greco T."/>
            <person name="Kemp K."/>
            <person name="Kramer J."/>
            <person name="Fulton L."/>
            <person name="Mardis E."/>
            <person name="Dante M."/>
            <person name="Pepin K."/>
            <person name="Hillier L.W."/>
            <person name="Nelson J."/>
            <person name="Spieth J."/>
            <person name="Ryan E."/>
            <person name="Andrews S."/>
            <person name="Geisel C."/>
            <person name="Layman D."/>
            <person name="Du H."/>
            <person name="Ali J."/>
            <person name="Berghoff A."/>
            <person name="Jones K."/>
            <person name="Drone K."/>
            <person name="Cotton M."/>
            <person name="Joshu C."/>
            <person name="Antonoiu B."/>
            <person name="Zidanic M."/>
            <person name="Strong C."/>
            <person name="Sun H."/>
            <person name="Lamar B."/>
            <person name="Yordan C."/>
            <person name="Ma P."/>
            <person name="Zhong J."/>
            <person name="Preston R."/>
            <person name="Vil D."/>
            <person name="Shekher M."/>
            <person name="Matero A."/>
            <person name="Shah R."/>
            <person name="Swaby I.K."/>
            <person name="O'Shaughnessy A."/>
            <person name="Rodriguez M."/>
            <person name="Hoffman J."/>
            <person name="Till S."/>
            <person name="Granat S."/>
            <person name="Shohdy N."/>
            <person name="Hasegawa A."/>
            <person name="Hameed A."/>
            <person name="Lodhi M."/>
            <person name="Johnson A."/>
            <person name="Chen E."/>
            <person name="Marra M.A."/>
            <person name="Martienssen R."/>
            <person name="McCombie W.R."/>
        </authorList>
    </citation>
    <scope>NUCLEOTIDE SEQUENCE [LARGE SCALE GENOMIC DNA]</scope>
    <source>
        <strain>cv. Columbia</strain>
    </source>
</reference>
<reference key="2">
    <citation type="journal article" date="2017" name="Plant J.">
        <title>Araport11: a complete reannotation of the Arabidopsis thaliana reference genome.</title>
        <authorList>
            <person name="Cheng C.Y."/>
            <person name="Krishnakumar V."/>
            <person name="Chan A.P."/>
            <person name="Thibaud-Nissen F."/>
            <person name="Schobel S."/>
            <person name="Town C.D."/>
        </authorList>
    </citation>
    <scope>GENOME REANNOTATION</scope>
    <source>
        <strain>cv. Columbia</strain>
    </source>
</reference>
<reference key="3">
    <citation type="journal article" date="2003" name="Science">
        <title>Empirical analysis of transcriptional activity in the Arabidopsis genome.</title>
        <authorList>
            <person name="Yamada K."/>
            <person name="Lim J."/>
            <person name="Dale J.M."/>
            <person name="Chen H."/>
            <person name="Shinn P."/>
            <person name="Palm C.J."/>
            <person name="Southwick A.M."/>
            <person name="Wu H.C."/>
            <person name="Kim C.J."/>
            <person name="Nguyen M."/>
            <person name="Pham P.K."/>
            <person name="Cheuk R.F."/>
            <person name="Karlin-Newmann G."/>
            <person name="Liu S.X."/>
            <person name="Lam B."/>
            <person name="Sakano H."/>
            <person name="Wu T."/>
            <person name="Yu G."/>
            <person name="Miranda M."/>
            <person name="Quach H.L."/>
            <person name="Tripp M."/>
            <person name="Chang C.H."/>
            <person name="Lee J.M."/>
            <person name="Toriumi M.J."/>
            <person name="Chan M.M."/>
            <person name="Tang C.C."/>
            <person name="Onodera C.S."/>
            <person name="Deng J.M."/>
            <person name="Akiyama K."/>
            <person name="Ansari Y."/>
            <person name="Arakawa T."/>
            <person name="Banh J."/>
            <person name="Banno F."/>
            <person name="Bowser L."/>
            <person name="Brooks S.Y."/>
            <person name="Carninci P."/>
            <person name="Chao Q."/>
            <person name="Choy N."/>
            <person name="Enju A."/>
            <person name="Goldsmith A.D."/>
            <person name="Gurjal M."/>
            <person name="Hansen N.F."/>
            <person name="Hayashizaki Y."/>
            <person name="Johnson-Hopson C."/>
            <person name="Hsuan V.W."/>
            <person name="Iida K."/>
            <person name="Karnes M."/>
            <person name="Khan S."/>
            <person name="Koesema E."/>
            <person name="Ishida J."/>
            <person name="Jiang P.X."/>
            <person name="Jones T."/>
            <person name="Kawai J."/>
            <person name="Kamiya A."/>
            <person name="Meyers C."/>
            <person name="Nakajima M."/>
            <person name="Narusaka M."/>
            <person name="Seki M."/>
            <person name="Sakurai T."/>
            <person name="Satou M."/>
            <person name="Tamse R."/>
            <person name="Vaysberg M."/>
            <person name="Wallender E.K."/>
            <person name="Wong C."/>
            <person name="Yamamura Y."/>
            <person name="Yuan S."/>
            <person name="Shinozaki K."/>
            <person name="Davis R.W."/>
            <person name="Theologis A."/>
            <person name="Ecker J.R."/>
        </authorList>
    </citation>
    <scope>NUCLEOTIDE SEQUENCE [LARGE SCALE MRNA]</scope>
    <source>
        <strain>cv. Columbia</strain>
    </source>
</reference>
<reference key="4">
    <citation type="journal article" date="2012" name="Mol. Cell. Proteomics">
        <title>Comparative large-scale characterisation of plant vs. mammal proteins reveals similar and idiosyncratic N-alpha acetylation features.</title>
        <authorList>
            <person name="Bienvenut W.V."/>
            <person name="Sumpton D."/>
            <person name="Martinez A."/>
            <person name="Lilla S."/>
            <person name="Espagne C."/>
            <person name="Meinnel T."/>
            <person name="Giglione C."/>
        </authorList>
    </citation>
    <scope>IDENTIFICATION BY MASS SPECTROMETRY [LARGE SCALE ANALYSIS]</scope>
</reference>
<reference key="5">
    <citation type="journal article" date="2012" name="Plant Physiol.">
        <title>The atypical short-chain dehydrogenases HCF173 and HCF244 are jointly involved in translational initiation of the psbA mRNA of Arabidopsis.</title>
        <authorList>
            <person name="Link S."/>
            <person name="Engelmann K."/>
            <person name="Meierhoff K."/>
            <person name="Westhoff P."/>
        </authorList>
    </citation>
    <scope>FUNCTION</scope>
    <scope>DISRUPTION PHENOTYPE</scope>
    <scope>SUBCELLULAR LOCATION</scope>
    <scope>SUBUNIT</scope>
</reference>
<reference key="6">
    <citation type="journal article" date="2016" name="Front. Plant Sci.">
        <title>Identification and roles of photosystem II assembly, stability, and repair factors in Arabidopsis.</title>
        <authorList>
            <person name="Lu Y."/>
        </authorList>
    </citation>
    <scope>REVIEW ON PHOTOSYSTEM II ASSEMBLY</scope>
</reference>
<reference key="7">
    <citation type="journal article" date="2018" name="Plant Physiol.">
        <title>Stable accumulation of photosystem II requires ONE-HELIX PROTEIN1 (OHP1) of the light harvesting-like family.</title>
        <authorList>
            <person name="Myouga F."/>
            <person name="Takahashi K."/>
            <person name="Tanaka R."/>
            <person name="Nagata N."/>
            <person name="Kiss A.Z."/>
            <person name="Funk C."/>
            <person name="Nomura Y."/>
            <person name="Nakagami H."/>
            <person name="Jansson S."/>
            <person name="Shinozaki K."/>
        </authorList>
    </citation>
    <scope>SUBUNIT</scope>
    <scope>INTERACTION WITH OHP1</scope>
    <source>
        <strain>cv. Columbia</strain>
    </source>
</reference>
<reference key="8">
    <citation type="journal article" date="2018" name="Plant Physiol.">
        <title>ONE-HELIX PROTEIN2 (OHP2) is required for the stability of OHP1 and assembly factor HCF244 and is functionally linked to PSII biogenesis.</title>
        <authorList>
            <person name="Hey D."/>
            <person name="Grimm B."/>
        </authorList>
    </citation>
    <scope>FUNCTION</scope>
    <scope>INTERACTION WITH OHP1 AND OHP2</scope>
</reference>
<reference key="9">
    <citation type="journal article" date="2019" name="Plant Physiol.">
        <title>OHP1, OHP2, and HCF244 form a transient functional complex with the photosystem II reaction center.</title>
        <authorList>
            <person name="Li Y."/>
            <person name="Liu B."/>
            <person name="Zhang J."/>
            <person name="Kong F."/>
            <person name="Zhang L."/>
            <person name="Meng H."/>
            <person name="Li W."/>
            <person name="Rochaix J.D."/>
            <person name="Li D."/>
            <person name="Peng L."/>
        </authorList>
    </citation>
    <scope>FUNCTION</scope>
    <scope>INTERACTION WITH OHP1 AND OHP2</scope>
</reference>
<reference key="10">
    <citation type="journal article" date="2020" name="Plants (Basel)">
        <title>Exploring the Link between Photosystem II Assembly and Translation of the Chloroplast psbA mRNA.</title>
        <authorList>
            <person name="Chotewutmontri P."/>
            <person name="Williams-Carrier R."/>
            <person name="Barkan A."/>
        </authorList>
    </citation>
    <scope>FUNCTION</scope>
</reference>